<comment type="similarity">
    <text evidence="2">Belongs to the UPF0758 family.</text>
</comment>
<protein>
    <recommendedName>
        <fullName>UPF0758 protein ACIAD3126</fullName>
    </recommendedName>
</protein>
<evidence type="ECO:0000255" key="1">
    <source>
        <dbReference type="PROSITE-ProRule" id="PRU01182"/>
    </source>
</evidence>
<evidence type="ECO:0000305" key="2"/>
<organism>
    <name type="scientific">Acinetobacter baylyi (strain ATCC 33305 / BD413 / ADP1)</name>
    <dbReference type="NCBI Taxonomy" id="62977"/>
    <lineage>
        <taxon>Bacteria</taxon>
        <taxon>Pseudomonadati</taxon>
        <taxon>Pseudomonadota</taxon>
        <taxon>Gammaproteobacteria</taxon>
        <taxon>Moraxellales</taxon>
        <taxon>Moraxellaceae</taxon>
        <taxon>Acinetobacter</taxon>
    </lineage>
</organism>
<dbReference type="EMBL" id="CR543861">
    <property type="protein sequence ID" value="CAG69817.1"/>
    <property type="molecule type" value="Genomic_DNA"/>
</dbReference>
<dbReference type="SMR" id="Q6F7Z8"/>
<dbReference type="STRING" id="202950.GCA_001485005_02777"/>
<dbReference type="KEGG" id="aci:ACIAD3126"/>
<dbReference type="eggNOG" id="COG2003">
    <property type="taxonomic scope" value="Bacteria"/>
</dbReference>
<dbReference type="HOGENOM" id="CLU_073529_0_2_6"/>
<dbReference type="Proteomes" id="UP000000430">
    <property type="component" value="Chromosome"/>
</dbReference>
<dbReference type="GO" id="GO:0046872">
    <property type="term" value="F:metal ion binding"/>
    <property type="evidence" value="ECO:0007669"/>
    <property type="project" value="UniProtKB-KW"/>
</dbReference>
<dbReference type="GO" id="GO:0008237">
    <property type="term" value="F:metallopeptidase activity"/>
    <property type="evidence" value="ECO:0007669"/>
    <property type="project" value="UniProtKB-KW"/>
</dbReference>
<dbReference type="GO" id="GO:0006508">
    <property type="term" value="P:proteolysis"/>
    <property type="evidence" value="ECO:0007669"/>
    <property type="project" value="UniProtKB-KW"/>
</dbReference>
<dbReference type="CDD" id="cd08071">
    <property type="entry name" value="MPN_DUF2466"/>
    <property type="match status" value="1"/>
</dbReference>
<dbReference type="Gene3D" id="3.40.140.10">
    <property type="entry name" value="Cytidine Deaminase, domain 2"/>
    <property type="match status" value="1"/>
</dbReference>
<dbReference type="InterPro" id="IPR037518">
    <property type="entry name" value="MPN"/>
</dbReference>
<dbReference type="InterPro" id="IPR025657">
    <property type="entry name" value="RadC_JAB"/>
</dbReference>
<dbReference type="InterPro" id="IPR010994">
    <property type="entry name" value="RuvA_2-like"/>
</dbReference>
<dbReference type="InterPro" id="IPR001405">
    <property type="entry name" value="UPF0758"/>
</dbReference>
<dbReference type="InterPro" id="IPR046778">
    <property type="entry name" value="UPF0758_N"/>
</dbReference>
<dbReference type="NCBIfam" id="NF000642">
    <property type="entry name" value="PRK00024.1"/>
    <property type="match status" value="1"/>
</dbReference>
<dbReference type="NCBIfam" id="TIGR00608">
    <property type="entry name" value="radc"/>
    <property type="match status" value="1"/>
</dbReference>
<dbReference type="PANTHER" id="PTHR30471">
    <property type="entry name" value="DNA REPAIR PROTEIN RADC"/>
    <property type="match status" value="1"/>
</dbReference>
<dbReference type="PANTHER" id="PTHR30471:SF3">
    <property type="entry name" value="UPF0758 PROTEIN YEES-RELATED"/>
    <property type="match status" value="1"/>
</dbReference>
<dbReference type="Pfam" id="PF04002">
    <property type="entry name" value="RadC"/>
    <property type="match status" value="1"/>
</dbReference>
<dbReference type="Pfam" id="PF20582">
    <property type="entry name" value="UPF0758_N"/>
    <property type="match status" value="1"/>
</dbReference>
<dbReference type="SUPFAM" id="SSF47781">
    <property type="entry name" value="RuvA domain 2-like"/>
    <property type="match status" value="1"/>
</dbReference>
<dbReference type="PROSITE" id="PS50249">
    <property type="entry name" value="MPN"/>
    <property type="match status" value="1"/>
</dbReference>
<accession>Q6F7Z8</accession>
<proteinExistence type="inferred from homology"/>
<sequence>MSFSNQNYNVHTFIIMNQSIKFWPEQERPRERLLHSGPESLSDAELLAIFLRTGSKQHSAVELARLMIQHFGGLNPVFDASLQELSHFHGIGTTKYAHLMAVKELGRRYLNHYFHQDALNLNSSRLVLDYLRYELLGEKQEVFAVLCLDSELRKLNFKKLFYGSLNACNISINHTLRYALQQHACHIVIAHNHPFGKAEPSAADLDLTHQLYQACQLVEIKLLDHFIIAKDGTFSFAERALLSQKKCMHTDIDKPDLTGEDHHKKSCDRSP</sequence>
<keyword id="KW-0378">Hydrolase</keyword>
<keyword id="KW-0479">Metal-binding</keyword>
<keyword id="KW-0482">Metalloprotease</keyword>
<keyword id="KW-0645">Protease</keyword>
<keyword id="KW-0862">Zinc</keyword>
<feature type="chain" id="PRO_0000190674" description="UPF0758 protein ACIAD3126">
    <location>
        <begin position="1"/>
        <end position="271"/>
    </location>
</feature>
<feature type="domain" description="MPN" evidence="1">
    <location>
        <begin position="120"/>
        <end position="242"/>
    </location>
</feature>
<feature type="short sequence motif" description="JAMM motif" evidence="1">
    <location>
        <begin position="191"/>
        <end position="204"/>
    </location>
</feature>
<feature type="binding site" evidence="1">
    <location>
        <position position="191"/>
    </location>
    <ligand>
        <name>Zn(2+)</name>
        <dbReference type="ChEBI" id="CHEBI:29105"/>
        <note>catalytic</note>
    </ligand>
</feature>
<feature type="binding site" evidence="1">
    <location>
        <position position="193"/>
    </location>
    <ligand>
        <name>Zn(2+)</name>
        <dbReference type="ChEBI" id="CHEBI:29105"/>
        <note>catalytic</note>
    </ligand>
</feature>
<feature type="binding site" evidence="1">
    <location>
        <position position="204"/>
    </location>
    <ligand>
        <name>Zn(2+)</name>
        <dbReference type="ChEBI" id="CHEBI:29105"/>
        <note>catalytic</note>
    </ligand>
</feature>
<gene>
    <name type="ordered locus">ACIAD3126</name>
</gene>
<name>Y3126_ACIAD</name>
<reference key="1">
    <citation type="journal article" date="2004" name="Nucleic Acids Res.">
        <title>Unique features revealed by the genome sequence of Acinetobacter sp. ADP1, a versatile and naturally transformation competent bacterium.</title>
        <authorList>
            <person name="Barbe V."/>
            <person name="Vallenet D."/>
            <person name="Fonknechten N."/>
            <person name="Kreimeyer A."/>
            <person name="Oztas S."/>
            <person name="Labarre L."/>
            <person name="Cruveiller S."/>
            <person name="Robert C."/>
            <person name="Duprat S."/>
            <person name="Wincker P."/>
            <person name="Ornston L.N."/>
            <person name="Weissenbach J."/>
            <person name="Marliere P."/>
            <person name="Cohen G.N."/>
            <person name="Medigue C."/>
        </authorList>
    </citation>
    <scope>NUCLEOTIDE SEQUENCE [LARGE SCALE GENOMIC DNA]</scope>
    <source>
        <strain>ATCC 33305 / BD413 / ADP1</strain>
    </source>
</reference>